<name>ISPH_PHOPR</name>
<proteinExistence type="inferred from homology"/>
<feature type="chain" id="PRO_0000128851" description="4-hydroxy-3-methylbut-2-enyl diphosphate reductase">
    <location>
        <begin position="1"/>
        <end position="313"/>
    </location>
</feature>
<feature type="active site" description="Proton donor" evidence="1">
    <location>
        <position position="126"/>
    </location>
</feature>
<feature type="binding site" evidence="1">
    <location>
        <position position="12"/>
    </location>
    <ligand>
        <name>[4Fe-4S] cluster</name>
        <dbReference type="ChEBI" id="CHEBI:49883"/>
    </ligand>
</feature>
<feature type="binding site" evidence="1">
    <location>
        <position position="41"/>
    </location>
    <ligand>
        <name>(2E)-4-hydroxy-3-methylbut-2-enyl diphosphate</name>
        <dbReference type="ChEBI" id="CHEBI:128753"/>
    </ligand>
</feature>
<feature type="binding site" evidence="1">
    <location>
        <position position="41"/>
    </location>
    <ligand>
        <name>dimethylallyl diphosphate</name>
        <dbReference type="ChEBI" id="CHEBI:57623"/>
    </ligand>
</feature>
<feature type="binding site" evidence="1">
    <location>
        <position position="41"/>
    </location>
    <ligand>
        <name>isopentenyl diphosphate</name>
        <dbReference type="ChEBI" id="CHEBI:128769"/>
    </ligand>
</feature>
<feature type="binding site" evidence="1">
    <location>
        <position position="74"/>
    </location>
    <ligand>
        <name>(2E)-4-hydroxy-3-methylbut-2-enyl diphosphate</name>
        <dbReference type="ChEBI" id="CHEBI:128753"/>
    </ligand>
</feature>
<feature type="binding site" evidence="1">
    <location>
        <position position="74"/>
    </location>
    <ligand>
        <name>dimethylallyl diphosphate</name>
        <dbReference type="ChEBI" id="CHEBI:57623"/>
    </ligand>
</feature>
<feature type="binding site" evidence="1">
    <location>
        <position position="74"/>
    </location>
    <ligand>
        <name>isopentenyl diphosphate</name>
        <dbReference type="ChEBI" id="CHEBI:128769"/>
    </ligand>
</feature>
<feature type="binding site" evidence="1">
    <location>
        <position position="96"/>
    </location>
    <ligand>
        <name>[4Fe-4S] cluster</name>
        <dbReference type="ChEBI" id="CHEBI:49883"/>
    </ligand>
</feature>
<feature type="binding site" evidence="1">
    <location>
        <position position="124"/>
    </location>
    <ligand>
        <name>(2E)-4-hydroxy-3-methylbut-2-enyl diphosphate</name>
        <dbReference type="ChEBI" id="CHEBI:128753"/>
    </ligand>
</feature>
<feature type="binding site" evidence="1">
    <location>
        <position position="124"/>
    </location>
    <ligand>
        <name>dimethylallyl diphosphate</name>
        <dbReference type="ChEBI" id="CHEBI:57623"/>
    </ligand>
</feature>
<feature type="binding site" evidence="1">
    <location>
        <position position="124"/>
    </location>
    <ligand>
        <name>isopentenyl diphosphate</name>
        <dbReference type="ChEBI" id="CHEBI:128769"/>
    </ligand>
</feature>
<feature type="binding site" evidence="1">
    <location>
        <position position="167"/>
    </location>
    <ligand>
        <name>(2E)-4-hydroxy-3-methylbut-2-enyl diphosphate</name>
        <dbReference type="ChEBI" id="CHEBI:128753"/>
    </ligand>
</feature>
<feature type="binding site" evidence="1">
    <location>
        <position position="197"/>
    </location>
    <ligand>
        <name>[4Fe-4S] cluster</name>
        <dbReference type="ChEBI" id="CHEBI:49883"/>
    </ligand>
</feature>
<feature type="binding site" evidence="1">
    <location>
        <position position="225"/>
    </location>
    <ligand>
        <name>(2E)-4-hydroxy-3-methylbut-2-enyl diphosphate</name>
        <dbReference type="ChEBI" id="CHEBI:128753"/>
    </ligand>
</feature>
<feature type="binding site" evidence="1">
    <location>
        <position position="225"/>
    </location>
    <ligand>
        <name>dimethylallyl diphosphate</name>
        <dbReference type="ChEBI" id="CHEBI:57623"/>
    </ligand>
</feature>
<feature type="binding site" evidence="1">
    <location>
        <position position="225"/>
    </location>
    <ligand>
        <name>isopentenyl diphosphate</name>
        <dbReference type="ChEBI" id="CHEBI:128769"/>
    </ligand>
</feature>
<feature type="binding site" evidence="1">
    <location>
        <position position="226"/>
    </location>
    <ligand>
        <name>(2E)-4-hydroxy-3-methylbut-2-enyl diphosphate</name>
        <dbReference type="ChEBI" id="CHEBI:128753"/>
    </ligand>
</feature>
<feature type="binding site" evidence="1">
    <location>
        <position position="226"/>
    </location>
    <ligand>
        <name>dimethylallyl diphosphate</name>
        <dbReference type="ChEBI" id="CHEBI:57623"/>
    </ligand>
</feature>
<feature type="binding site" evidence="1">
    <location>
        <position position="226"/>
    </location>
    <ligand>
        <name>isopentenyl diphosphate</name>
        <dbReference type="ChEBI" id="CHEBI:128769"/>
    </ligand>
</feature>
<feature type="binding site" evidence="1">
    <location>
        <position position="227"/>
    </location>
    <ligand>
        <name>(2E)-4-hydroxy-3-methylbut-2-enyl diphosphate</name>
        <dbReference type="ChEBI" id="CHEBI:128753"/>
    </ligand>
</feature>
<feature type="binding site" evidence="1">
    <location>
        <position position="227"/>
    </location>
    <ligand>
        <name>dimethylallyl diphosphate</name>
        <dbReference type="ChEBI" id="CHEBI:57623"/>
    </ligand>
</feature>
<feature type="binding site" evidence="1">
    <location>
        <position position="227"/>
    </location>
    <ligand>
        <name>isopentenyl diphosphate</name>
        <dbReference type="ChEBI" id="CHEBI:128769"/>
    </ligand>
</feature>
<feature type="binding site" evidence="1">
    <location>
        <position position="269"/>
    </location>
    <ligand>
        <name>(2E)-4-hydroxy-3-methylbut-2-enyl diphosphate</name>
        <dbReference type="ChEBI" id="CHEBI:128753"/>
    </ligand>
</feature>
<feature type="binding site" evidence="1">
    <location>
        <position position="269"/>
    </location>
    <ligand>
        <name>dimethylallyl diphosphate</name>
        <dbReference type="ChEBI" id="CHEBI:57623"/>
    </ligand>
</feature>
<feature type="binding site" evidence="1">
    <location>
        <position position="269"/>
    </location>
    <ligand>
        <name>isopentenyl diphosphate</name>
        <dbReference type="ChEBI" id="CHEBI:128769"/>
    </ligand>
</feature>
<evidence type="ECO:0000255" key="1">
    <source>
        <dbReference type="HAMAP-Rule" id="MF_00191"/>
    </source>
</evidence>
<gene>
    <name evidence="1" type="primary">ispH</name>
    <name type="ordered locus">PBPRA0594</name>
</gene>
<keyword id="KW-0004">4Fe-4S</keyword>
<keyword id="KW-0408">Iron</keyword>
<keyword id="KW-0411">Iron-sulfur</keyword>
<keyword id="KW-0414">Isoprene biosynthesis</keyword>
<keyword id="KW-0479">Metal-binding</keyword>
<keyword id="KW-0560">Oxidoreductase</keyword>
<keyword id="KW-1185">Reference proteome</keyword>
<sequence>MKILLANPRGFCAGVDRAISIVERALEMYQPPIYVRHEVVHNRFVVEGLKQRGAIFVEELSEVPDDNIVIFSAHGVSQAVRNEAKERQLTVFDATCPLVTKVHMEVARASRRSVEVVLIGHAGHPEVEGTMGQYASEDGGMYLVEKPEDVEKLQVKDPSNLHYVSQTTLSVDETADVIDQLRKVFPEIQGPRKDDICYATQNRQDAVREMAESVDVMIVVGSKNSSNSNRLRELSEKLGTPGFLTDCPEDVQPVWFEGKTKVGVTAGASAPEDLVNQIISRIQALIGGDVEELSGREENMFFEVPRELQVKNI</sequence>
<reference key="1">
    <citation type="journal article" date="2005" name="Science">
        <title>Life at depth: Photobacterium profundum genome sequence and expression analysis.</title>
        <authorList>
            <person name="Vezzi A."/>
            <person name="Campanaro S."/>
            <person name="D'Angelo M."/>
            <person name="Simonato F."/>
            <person name="Vitulo N."/>
            <person name="Lauro F.M."/>
            <person name="Cestaro A."/>
            <person name="Malacrida G."/>
            <person name="Simionati B."/>
            <person name="Cannata N."/>
            <person name="Romualdi C."/>
            <person name="Bartlett D.H."/>
            <person name="Valle G."/>
        </authorList>
    </citation>
    <scope>NUCLEOTIDE SEQUENCE [LARGE SCALE GENOMIC DNA]</scope>
    <source>
        <strain>ATCC BAA-1253 / SS9</strain>
    </source>
</reference>
<organism>
    <name type="scientific">Photobacterium profundum (strain SS9)</name>
    <dbReference type="NCBI Taxonomy" id="298386"/>
    <lineage>
        <taxon>Bacteria</taxon>
        <taxon>Pseudomonadati</taxon>
        <taxon>Pseudomonadota</taxon>
        <taxon>Gammaproteobacteria</taxon>
        <taxon>Vibrionales</taxon>
        <taxon>Vibrionaceae</taxon>
        <taxon>Photobacterium</taxon>
    </lineage>
</organism>
<protein>
    <recommendedName>
        <fullName evidence="1">4-hydroxy-3-methylbut-2-enyl diphosphate reductase</fullName>
        <shortName evidence="1">HMBPP reductase</shortName>
        <ecNumber evidence="1">1.17.7.4</ecNumber>
    </recommendedName>
</protein>
<comment type="function">
    <text evidence="1">Catalyzes the conversion of 1-hydroxy-2-methyl-2-(E)-butenyl 4-diphosphate (HMBPP) into a mixture of isopentenyl diphosphate (IPP) and dimethylallyl diphosphate (DMAPP). Acts in the terminal step of the DOXP/MEP pathway for isoprenoid precursor biosynthesis.</text>
</comment>
<comment type="catalytic activity">
    <reaction evidence="1">
        <text>isopentenyl diphosphate + 2 oxidized [2Fe-2S]-[ferredoxin] + H2O = (2E)-4-hydroxy-3-methylbut-2-enyl diphosphate + 2 reduced [2Fe-2S]-[ferredoxin] + 2 H(+)</text>
        <dbReference type="Rhea" id="RHEA:24488"/>
        <dbReference type="Rhea" id="RHEA-COMP:10000"/>
        <dbReference type="Rhea" id="RHEA-COMP:10001"/>
        <dbReference type="ChEBI" id="CHEBI:15377"/>
        <dbReference type="ChEBI" id="CHEBI:15378"/>
        <dbReference type="ChEBI" id="CHEBI:33737"/>
        <dbReference type="ChEBI" id="CHEBI:33738"/>
        <dbReference type="ChEBI" id="CHEBI:128753"/>
        <dbReference type="ChEBI" id="CHEBI:128769"/>
        <dbReference type="EC" id="1.17.7.4"/>
    </reaction>
</comment>
<comment type="catalytic activity">
    <reaction evidence="1">
        <text>dimethylallyl diphosphate + 2 oxidized [2Fe-2S]-[ferredoxin] + H2O = (2E)-4-hydroxy-3-methylbut-2-enyl diphosphate + 2 reduced [2Fe-2S]-[ferredoxin] + 2 H(+)</text>
        <dbReference type="Rhea" id="RHEA:24825"/>
        <dbReference type="Rhea" id="RHEA-COMP:10000"/>
        <dbReference type="Rhea" id="RHEA-COMP:10001"/>
        <dbReference type="ChEBI" id="CHEBI:15377"/>
        <dbReference type="ChEBI" id="CHEBI:15378"/>
        <dbReference type="ChEBI" id="CHEBI:33737"/>
        <dbReference type="ChEBI" id="CHEBI:33738"/>
        <dbReference type="ChEBI" id="CHEBI:57623"/>
        <dbReference type="ChEBI" id="CHEBI:128753"/>
        <dbReference type="EC" id="1.17.7.4"/>
    </reaction>
</comment>
<comment type="cofactor">
    <cofactor evidence="1">
        <name>[4Fe-4S] cluster</name>
        <dbReference type="ChEBI" id="CHEBI:49883"/>
    </cofactor>
    <text evidence="1">Binds 1 [4Fe-4S] cluster per subunit.</text>
</comment>
<comment type="pathway">
    <text evidence="1">Isoprenoid biosynthesis; dimethylallyl diphosphate biosynthesis; dimethylallyl diphosphate from (2E)-4-hydroxy-3-methylbutenyl diphosphate: step 1/1.</text>
</comment>
<comment type="pathway">
    <text evidence="1">Isoprenoid biosynthesis; isopentenyl diphosphate biosynthesis via DXP pathway; isopentenyl diphosphate from 1-deoxy-D-xylulose 5-phosphate: step 6/6.</text>
</comment>
<comment type="similarity">
    <text evidence="1">Belongs to the IspH family.</text>
</comment>
<dbReference type="EC" id="1.17.7.4" evidence="1"/>
<dbReference type="EMBL" id="CR378664">
    <property type="protein sequence ID" value="CAG19017.1"/>
    <property type="molecule type" value="Genomic_DNA"/>
</dbReference>
<dbReference type="RefSeq" id="WP_011217367.1">
    <property type="nucleotide sequence ID" value="NC_006370.1"/>
</dbReference>
<dbReference type="SMR" id="Q6LUK8"/>
<dbReference type="STRING" id="298386.PBPRA0594"/>
<dbReference type="KEGG" id="ppr:PBPRA0594"/>
<dbReference type="eggNOG" id="COG0761">
    <property type="taxonomic scope" value="Bacteria"/>
</dbReference>
<dbReference type="HOGENOM" id="CLU_027486_1_0_6"/>
<dbReference type="UniPathway" id="UPA00056">
    <property type="reaction ID" value="UER00097"/>
</dbReference>
<dbReference type="UniPathway" id="UPA00059">
    <property type="reaction ID" value="UER00105"/>
</dbReference>
<dbReference type="Proteomes" id="UP000000593">
    <property type="component" value="Chromosome 1"/>
</dbReference>
<dbReference type="GO" id="GO:0051539">
    <property type="term" value="F:4 iron, 4 sulfur cluster binding"/>
    <property type="evidence" value="ECO:0007669"/>
    <property type="project" value="UniProtKB-UniRule"/>
</dbReference>
<dbReference type="GO" id="GO:0051745">
    <property type="term" value="F:4-hydroxy-3-methylbut-2-enyl diphosphate reductase activity"/>
    <property type="evidence" value="ECO:0007669"/>
    <property type="project" value="UniProtKB-UniRule"/>
</dbReference>
<dbReference type="GO" id="GO:0046872">
    <property type="term" value="F:metal ion binding"/>
    <property type="evidence" value="ECO:0007669"/>
    <property type="project" value="UniProtKB-KW"/>
</dbReference>
<dbReference type="GO" id="GO:0050992">
    <property type="term" value="P:dimethylallyl diphosphate biosynthetic process"/>
    <property type="evidence" value="ECO:0007669"/>
    <property type="project" value="UniProtKB-UniRule"/>
</dbReference>
<dbReference type="GO" id="GO:0019288">
    <property type="term" value="P:isopentenyl diphosphate biosynthetic process, methylerythritol 4-phosphate pathway"/>
    <property type="evidence" value="ECO:0007669"/>
    <property type="project" value="UniProtKB-UniRule"/>
</dbReference>
<dbReference type="GO" id="GO:0016114">
    <property type="term" value="P:terpenoid biosynthetic process"/>
    <property type="evidence" value="ECO:0007669"/>
    <property type="project" value="UniProtKB-UniRule"/>
</dbReference>
<dbReference type="CDD" id="cd13944">
    <property type="entry name" value="lytB_ispH"/>
    <property type="match status" value="1"/>
</dbReference>
<dbReference type="FunFam" id="3.40.50.11270:FF:000001">
    <property type="entry name" value="4-hydroxy-3-methylbut-2-enyl diphosphate reductase"/>
    <property type="match status" value="1"/>
</dbReference>
<dbReference type="Gene3D" id="3.40.50.11270">
    <property type="match status" value="1"/>
</dbReference>
<dbReference type="Gene3D" id="3.40.1010.20">
    <property type="entry name" value="4-hydroxy-3-methylbut-2-enyl diphosphate reductase, catalytic domain"/>
    <property type="match status" value="2"/>
</dbReference>
<dbReference type="HAMAP" id="MF_00191">
    <property type="entry name" value="IspH"/>
    <property type="match status" value="1"/>
</dbReference>
<dbReference type="InterPro" id="IPR003451">
    <property type="entry name" value="LytB/IspH"/>
</dbReference>
<dbReference type="NCBIfam" id="TIGR00216">
    <property type="entry name" value="ispH_lytB"/>
    <property type="match status" value="1"/>
</dbReference>
<dbReference type="NCBIfam" id="NF002188">
    <property type="entry name" value="PRK01045.1-2"/>
    <property type="match status" value="1"/>
</dbReference>
<dbReference type="NCBIfam" id="NF002190">
    <property type="entry name" value="PRK01045.1-4"/>
    <property type="match status" value="1"/>
</dbReference>
<dbReference type="PANTHER" id="PTHR30426">
    <property type="entry name" value="4-HYDROXY-3-METHYLBUT-2-ENYL DIPHOSPHATE REDUCTASE"/>
    <property type="match status" value="1"/>
</dbReference>
<dbReference type="PANTHER" id="PTHR30426:SF0">
    <property type="entry name" value="4-HYDROXY-3-METHYLBUT-2-ENYL DIPHOSPHATE REDUCTASE"/>
    <property type="match status" value="1"/>
</dbReference>
<dbReference type="Pfam" id="PF02401">
    <property type="entry name" value="LYTB"/>
    <property type="match status" value="1"/>
</dbReference>
<accession>Q6LUK8</accession>